<keyword id="KW-0025">Alternative splicing</keyword>
<keyword id="KW-0130">Cell adhesion</keyword>
<keyword id="KW-0256">Endoplasmic reticulum</keyword>
<keyword id="KW-0325">Glycoprotein</keyword>
<keyword id="KW-1267">Proteomics identification</keyword>
<keyword id="KW-1185">Reference proteome</keyword>
<keyword id="KW-0732">Signal</keyword>
<proteinExistence type="evidence at protein level"/>
<gene>
    <name type="primary">CERCAM</name>
    <name type="synonym">CEECAM1</name>
    <name type="synonym">GLT25D3</name>
    <name type="synonym">KIAA1502</name>
</gene>
<organism>
    <name type="scientific">Homo sapiens</name>
    <name type="common">Human</name>
    <dbReference type="NCBI Taxonomy" id="9606"/>
    <lineage>
        <taxon>Eukaryota</taxon>
        <taxon>Metazoa</taxon>
        <taxon>Chordata</taxon>
        <taxon>Craniata</taxon>
        <taxon>Vertebrata</taxon>
        <taxon>Euteleostomi</taxon>
        <taxon>Mammalia</taxon>
        <taxon>Eutheria</taxon>
        <taxon>Euarchontoglires</taxon>
        <taxon>Primates</taxon>
        <taxon>Haplorrhini</taxon>
        <taxon>Catarrhini</taxon>
        <taxon>Hominidae</taxon>
        <taxon>Homo</taxon>
    </lineage>
</organism>
<dbReference type="EMBL" id="AF177203">
    <property type="protein sequence ID" value="AAD51367.1"/>
    <property type="molecule type" value="mRNA"/>
</dbReference>
<dbReference type="EMBL" id="AK074519">
    <property type="protein sequence ID" value="BAC11036.1"/>
    <property type="molecule type" value="mRNA"/>
</dbReference>
<dbReference type="EMBL" id="AK074523">
    <property type="protein sequence ID" value="BAC11040.1"/>
    <property type="status" value="ALT_INIT"/>
    <property type="molecule type" value="mRNA"/>
</dbReference>
<dbReference type="EMBL" id="AL359091">
    <property type="status" value="NOT_ANNOTATED_CDS"/>
    <property type="molecule type" value="Genomic_DNA"/>
</dbReference>
<dbReference type="EMBL" id="CH471090">
    <property type="protein sequence ID" value="EAW87787.1"/>
    <property type="molecule type" value="Genomic_DNA"/>
</dbReference>
<dbReference type="EMBL" id="CH471090">
    <property type="protein sequence ID" value="EAW87789.1"/>
    <property type="molecule type" value="Genomic_DNA"/>
</dbReference>
<dbReference type="EMBL" id="BC011811">
    <property type="protein sequence ID" value="AAH11811.2"/>
    <property type="molecule type" value="mRNA"/>
</dbReference>
<dbReference type="EMBL" id="BC098432">
    <property type="protein sequence ID" value="AAH98432.2"/>
    <property type="status" value="ALT_INIT"/>
    <property type="molecule type" value="mRNA"/>
</dbReference>
<dbReference type="EMBL" id="BC108698">
    <property type="protein sequence ID" value="AAI08699.1"/>
    <property type="molecule type" value="mRNA"/>
</dbReference>
<dbReference type="EMBL" id="BC119698">
    <property type="protein sequence ID" value="AAI19699.1"/>
    <property type="status" value="ALT_INIT"/>
    <property type="molecule type" value="mRNA"/>
</dbReference>
<dbReference type="EMBL" id="BC119699">
    <property type="protein sequence ID" value="AAI19700.1"/>
    <property type="status" value="ALT_INIT"/>
    <property type="molecule type" value="mRNA"/>
</dbReference>
<dbReference type="EMBL" id="AB040935">
    <property type="protein sequence ID" value="BAA96026.1"/>
    <property type="status" value="ALT_INIT"/>
    <property type="molecule type" value="mRNA"/>
</dbReference>
<dbReference type="CCDS" id="CCDS6901.2">
    <molecule id="Q5T4B2-1"/>
</dbReference>
<dbReference type="CCDS" id="CCDS69675.1">
    <molecule id="Q5T4B2-2"/>
</dbReference>
<dbReference type="RefSeq" id="NP_001273689.1">
    <molecule id="Q5T4B2-2"/>
    <property type="nucleotide sequence ID" value="NM_001286760.1"/>
</dbReference>
<dbReference type="RefSeq" id="NP_057258.3">
    <molecule id="Q5T4B2-1"/>
    <property type="nucleotide sequence ID" value="NM_016174.4"/>
</dbReference>
<dbReference type="RefSeq" id="XP_005252092.1">
    <property type="nucleotide sequence ID" value="XM_005252035.1"/>
</dbReference>
<dbReference type="RefSeq" id="XP_011517064.1">
    <property type="nucleotide sequence ID" value="XM_011518762.1"/>
</dbReference>
<dbReference type="RefSeq" id="XP_011517065.1">
    <molecule id="Q5T4B2-2"/>
    <property type="nucleotide sequence ID" value="XM_011518763.4"/>
</dbReference>
<dbReference type="RefSeq" id="XP_016870283.1">
    <property type="nucleotide sequence ID" value="XM_017014794.1"/>
</dbReference>
<dbReference type="RefSeq" id="XP_047279406.1">
    <molecule id="Q5T4B2-2"/>
    <property type="nucleotide sequence ID" value="XM_047423450.1"/>
</dbReference>
<dbReference type="RefSeq" id="XP_054219036.1">
    <molecule id="Q5T4B2-1"/>
    <property type="nucleotide sequence ID" value="XM_054363061.1"/>
</dbReference>
<dbReference type="RefSeq" id="XP_054219037.1">
    <molecule id="Q5T4B2-1"/>
    <property type="nucleotide sequence ID" value="XM_054363062.1"/>
</dbReference>
<dbReference type="RefSeq" id="XP_054219038.1">
    <molecule id="Q5T4B2-2"/>
    <property type="nucleotide sequence ID" value="XM_054363063.1"/>
</dbReference>
<dbReference type="RefSeq" id="XP_054219039.1">
    <molecule id="Q5T4B2-2"/>
    <property type="nucleotide sequence ID" value="XM_054363064.1"/>
</dbReference>
<dbReference type="SMR" id="Q5T4B2"/>
<dbReference type="BioGRID" id="119332">
    <property type="interactions" value="171"/>
</dbReference>
<dbReference type="FunCoup" id="Q5T4B2">
    <property type="interactions" value="770"/>
</dbReference>
<dbReference type="IntAct" id="Q5T4B2">
    <property type="interactions" value="111"/>
</dbReference>
<dbReference type="STRING" id="9606.ENSP00000361929"/>
<dbReference type="CAZy" id="GT25">
    <property type="family name" value="Glycosyltransferase Family 25"/>
</dbReference>
<dbReference type="GlyCosmos" id="Q5T4B2">
    <property type="glycosylation" value="4 sites, No reported glycans"/>
</dbReference>
<dbReference type="GlyGen" id="Q5T4B2">
    <property type="glycosylation" value="4 sites, 4 N-linked glycans (2 sites)"/>
</dbReference>
<dbReference type="iPTMnet" id="Q5T4B2"/>
<dbReference type="PhosphoSitePlus" id="Q5T4B2"/>
<dbReference type="BioMuta" id="CERCAM"/>
<dbReference type="jPOST" id="Q5T4B2"/>
<dbReference type="MassIVE" id="Q5T4B2"/>
<dbReference type="PaxDb" id="9606-ENSP00000361929"/>
<dbReference type="PeptideAtlas" id="Q5T4B2"/>
<dbReference type="ProteomicsDB" id="64440">
    <molecule id="Q5T4B2-1"/>
</dbReference>
<dbReference type="ProteomicsDB" id="64441">
    <molecule id="Q5T4B2-2"/>
</dbReference>
<dbReference type="Pumba" id="Q5T4B2"/>
<dbReference type="Antibodypedia" id="17470">
    <property type="antibodies" value="109 antibodies from 22 providers"/>
</dbReference>
<dbReference type="DNASU" id="51148"/>
<dbReference type="Ensembl" id="ENST00000372838.9">
    <molecule id="Q5T4B2-1"/>
    <property type="protein sequence ID" value="ENSP00000361929.4"/>
    <property type="gene ID" value="ENSG00000167123.20"/>
</dbReference>
<dbReference type="Ensembl" id="ENST00000372842.5">
    <molecule id="Q5T4B2-2"/>
    <property type="protein sequence ID" value="ENSP00000361933.1"/>
    <property type="gene ID" value="ENSG00000167123.20"/>
</dbReference>
<dbReference type="GeneID" id="51148"/>
<dbReference type="KEGG" id="hsa:51148"/>
<dbReference type="MANE-Select" id="ENST00000372838.9">
    <property type="protein sequence ID" value="ENSP00000361929.4"/>
    <property type="RefSeq nucleotide sequence ID" value="NM_016174.5"/>
    <property type="RefSeq protein sequence ID" value="NP_057258.3"/>
</dbReference>
<dbReference type="UCSC" id="uc004buz.5">
    <molecule id="Q5T4B2-1"/>
    <property type="organism name" value="human"/>
</dbReference>
<dbReference type="AGR" id="HGNC:23723"/>
<dbReference type="CTD" id="51148"/>
<dbReference type="DisGeNET" id="51148"/>
<dbReference type="GeneCards" id="CERCAM"/>
<dbReference type="HGNC" id="HGNC:23723">
    <property type="gene designation" value="CERCAM"/>
</dbReference>
<dbReference type="HPA" id="ENSG00000167123">
    <property type="expression patterns" value="Group enriched (brain, pituitary gland)"/>
</dbReference>
<dbReference type="MIM" id="616626">
    <property type="type" value="gene"/>
</dbReference>
<dbReference type="neXtProt" id="NX_Q5T4B2"/>
<dbReference type="OpenTargets" id="ENSG00000167123"/>
<dbReference type="PharmGKB" id="PA162382177"/>
<dbReference type="VEuPathDB" id="HostDB:ENSG00000167123"/>
<dbReference type="eggNOG" id="KOG4179">
    <property type="taxonomic scope" value="Eukaryota"/>
</dbReference>
<dbReference type="GeneTree" id="ENSGT01030000234558"/>
<dbReference type="HOGENOM" id="CLU_024037_2_0_1"/>
<dbReference type="InParanoid" id="Q5T4B2"/>
<dbReference type="OMA" id="VEVHVCN"/>
<dbReference type="OrthoDB" id="47375at2759"/>
<dbReference type="PAN-GO" id="Q5T4B2">
    <property type="GO annotations" value="0 GO annotations based on evolutionary models"/>
</dbReference>
<dbReference type="PhylomeDB" id="Q5T4B2"/>
<dbReference type="TreeFam" id="TF313826"/>
<dbReference type="PathwayCommons" id="Q5T4B2"/>
<dbReference type="SignaLink" id="Q5T4B2"/>
<dbReference type="BioGRID-ORCS" id="51148">
    <property type="hits" value="22 hits in 1157 CRISPR screens"/>
</dbReference>
<dbReference type="ChiTaRS" id="CERCAM">
    <property type="organism name" value="human"/>
</dbReference>
<dbReference type="GenomeRNAi" id="51148"/>
<dbReference type="Pharos" id="Q5T4B2">
    <property type="development level" value="Tdark"/>
</dbReference>
<dbReference type="PRO" id="PR:Q5T4B2"/>
<dbReference type="Proteomes" id="UP000005640">
    <property type="component" value="Chromosome 9"/>
</dbReference>
<dbReference type="RNAct" id="Q5T4B2">
    <property type="molecule type" value="protein"/>
</dbReference>
<dbReference type="Bgee" id="ENSG00000167123">
    <property type="expression patterns" value="Expressed in C1 segment of cervical spinal cord and 145 other cell types or tissues"/>
</dbReference>
<dbReference type="ExpressionAtlas" id="Q5T4B2">
    <property type="expression patterns" value="baseline and differential"/>
</dbReference>
<dbReference type="GO" id="GO:0005788">
    <property type="term" value="C:endoplasmic reticulum lumen"/>
    <property type="evidence" value="ECO:0007669"/>
    <property type="project" value="UniProtKB-SubCell"/>
</dbReference>
<dbReference type="GO" id="GO:0005886">
    <property type="term" value="C:plasma membrane"/>
    <property type="evidence" value="ECO:0000303"/>
    <property type="project" value="ProtInc"/>
</dbReference>
<dbReference type="GO" id="GO:0042802">
    <property type="term" value="F:identical protein binding"/>
    <property type="evidence" value="ECO:0000353"/>
    <property type="project" value="IntAct"/>
</dbReference>
<dbReference type="GO" id="GO:0007155">
    <property type="term" value="P:cell adhesion"/>
    <property type="evidence" value="ECO:0000314"/>
    <property type="project" value="MGI"/>
</dbReference>
<dbReference type="GO" id="GO:0007159">
    <property type="term" value="P:leukocyte cell-cell adhesion"/>
    <property type="evidence" value="ECO:0000304"/>
    <property type="project" value="ProtInc"/>
</dbReference>
<dbReference type="CDD" id="cd06532">
    <property type="entry name" value="Glyco_transf_25"/>
    <property type="match status" value="1"/>
</dbReference>
<dbReference type="FunFam" id="3.90.550.10:FF:000048">
    <property type="entry name" value="Glycosyltransferase 25 family member 1"/>
    <property type="match status" value="1"/>
</dbReference>
<dbReference type="Gene3D" id="3.90.550.10">
    <property type="entry name" value="Spore Coat Polysaccharide Biosynthesis Protein SpsA, Chain A"/>
    <property type="match status" value="1"/>
</dbReference>
<dbReference type="InterPro" id="IPR050757">
    <property type="entry name" value="Collagen_mod_GT25"/>
</dbReference>
<dbReference type="InterPro" id="IPR002654">
    <property type="entry name" value="Glyco_trans_25"/>
</dbReference>
<dbReference type="InterPro" id="IPR029044">
    <property type="entry name" value="Nucleotide-diphossugar_trans"/>
</dbReference>
<dbReference type="PANTHER" id="PTHR10730:SF9">
    <property type="entry name" value="INACTIVE GLYCOSYLTRANSFERASE 25 FAMILY MEMBER 3"/>
    <property type="match status" value="1"/>
</dbReference>
<dbReference type="PANTHER" id="PTHR10730">
    <property type="entry name" value="PROCOLLAGEN-LYSINE,2-OXOGLUTARATE 5-DIOXYGENASE/GLYCOSYLTRANSFERASE 25 FAMILY MEMBER"/>
    <property type="match status" value="1"/>
</dbReference>
<dbReference type="Pfam" id="PF01755">
    <property type="entry name" value="Glyco_transf_25"/>
    <property type="match status" value="1"/>
</dbReference>
<dbReference type="SUPFAM" id="SSF53448">
    <property type="entry name" value="Nucleotide-diphospho-sugar transferases"/>
    <property type="match status" value="1"/>
</dbReference>
<dbReference type="PROSITE" id="PS00014">
    <property type="entry name" value="ER_TARGET"/>
    <property type="match status" value="1"/>
</dbReference>
<feature type="signal peptide" evidence="1">
    <location>
        <begin position="1"/>
        <end position="22"/>
    </location>
</feature>
<feature type="chain" id="PRO_0000309544" description="Inactive glycosyltransferase 25 family member 3">
    <location>
        <begin position="23"/>
        <end position="595"/>
    </location>
</feature>
<feature type="region of interest" description="Disordered" evidence="3">
    <location>
        <begin position="548"/>
        <end position="595"/>
    </location>
</feature>
<feature type="short sequence motif" description="Prevents secretion from ER" evidence="2">
    <location>
        <begin position="592"/>
        <end position="595"/>
    </location>
</feature>
<feature type="compositionally biased region" description="Polar residues" evidence="3">
    <location>
        <begin position="580"/>
        <end position="589"/>
    </location>
</feature>
<feature type="glycosylation site" description="N-linked (GlcNAc...) asparagine" evidence="1">
    <location>
        <position position="75"/>
    </location>
</feature>
<feature type="glycosylation site" description="N-linked (GlcNAc...) asparagine" evidence="1">
    <location>
        <position position="153"/>
    </location>
</feature>
<feature type="glycosylation site" description="N-linked (GlcNAc...) asparagine" evidence="1">
    <location>
        <position position="237"/>
    </location>
</feature>
<feature type="glycosylation site" description="N-linked (GlcNAc...) asparagine" evidence="1">
    <location>
        <position position="360"/>
    </location>
</feature>
<feature type="splice variant" id="VSP_029234" description="In isoform 2." evidence="7 8 9">
    <location>
        <begin position="1"/>
        <end position="78"/>
    </location>
</feature>
<feature type="mutagenesis site" description="No effect on lack of galactosyltransferase activity in a chimeric construct with COLGALT1. Exhibits some galactosyltransferase activity; when associated with R-450; M-451; Q-452 and V-453 in a chimeric construct with COLGALT1." evidence="6">
    <original>S</original>
    <variation>D</variation>
    <location>
        <position position="440"/>
    </location>
</feature>
<feature type="mutagenesis site" description="Exhibits some galactosyltransferase activity; when associated with D-440; M-451; Q-452 and V-453 in a chimeric construct with COLGALT1." evidence="6">
    <original>Q</original>
    <variation>R</variation>
    <location>
        <position position="450"/>
    </location>
</feature>
<feature type="mutagenesis site" description="Exhibits some galactosyltransferase activity; when associated with D-440; R-450; Q-452 and V-453 in a chimeric construct with COLGALT1." evidence="6">
    <original>V</original>
    <variation>M</variation>
    <location>
        <position position="451"/>
    </location>
</feature>
<feature type="mutagenesis site" description="Exhibits some galactosyltransferase activity; when associated with D-440; R-450; M-451 and V-453 in a chimeric construct with COLGALT1." evidence="6">
    <original>N</original>
    <variation>Q</variation>
    <location>
        <position position="452"/>
    </location>
</feature>
<feature type="mutagenesis site" description="Exhibits some galactosyltransferase activity; when associated with D-440; R-450; M-451 and Q-452 in a chimeric construct with COLGALT1." evidence="6">
    <original>P</original>
    <variation>V</variation>
    <location>
        <position position="453"/>
    </location>
</feature>
<feature type="sequence conflict" description="In Ref. 5; AAI19700." evidence="10" ref="5">
    <original>R</original>
    <variation>H</variation>
    <location>
        <position position="209"/>
    </location>
</feature>
<feature type="sequence conflict" description="In Ref. 1; AAD51367." evidence="10" ref="1">
    <original>GWM</original>
    <variation>AGW</variation>
    <location>
        <begin position="356"/>
        <end position="358"/>
    </location>
</feature>
<comment type="function">
    <text evidence="4 5">Probable cell adhesion protein involved in leukocyte transmigration across the blood-brain barrier. Does not express any beta-galactosyltransferase activity in vitro.</text>
</comment>
<comment type="interaction">
    <interactant intactId="EBI-12261896">
        <id>Q5T4B2</id>
    </interactant>
    <interactant intactId="EBI-2813554">
        <id>Q8WTS1</id>
        <label>ABHD5</label>
    </interactant>
    <organismsDiffer>false</organismsDiffer>
    <experiments>3</experiments>
</comment>
<comment type="interaction">
    <interactant intactId="EBI-12261896">
        <id>Q5T4B2</id>
    </interactant>
    <interactant intactId="EBI-12006308">
        <id>Q7Z3C6-3</id>
        <label>ATG9A</label>
    </interactant>
    <organismsDiffer>false</organismsDiffer>
    <experiments>3</experiments>
</comment>
<comment type="interaction">
    <interactant intactId="EBI-12261896">
        <id>Q5T4B2</id>
    </interactant>
    <interactant intactId="EBI-396137">
        <id>Q9UJX2</id>
        <label>CDC23</label>
    </interactant>
    <organismsDiffer>false</organismsDiffer>
    <experiments>3</experiments>
</comment>
<comment type="interaction">
    <interactant intactId="EBI-12261896">
        <id>Q5T4B2</id>
    </interactant>
    <interactant intactId="EBI-12261896">
        <id>Q5T4B2</id>
        <label>CERCAM</label>
    </interactant>
    <organismsDiffer>false</organismsDiffer>
    <experiments>3</experiments>
</comment>
<comment type="interaction">
    <interactant intactId="EBI-12261896">
        <id>Q5T4B2</id>
    </interactant>
    <interactant intactId="EBI-10192698">
        <id>Q02930-3</id>
        <label>CREB5</label>
    </interactant>
    <organismsDiffer>false</organismsDiffer>
    <experiments>3</experiments>
</comment>
<comment type="interaction">
    <interactant intactId="EBI-12261896">
        <id>Q5T4B2</id>
    </interactant>
    <interactant intactId="EBI-3867333">
        <id>A8MQ03</id>
        <label>CYSRT1</label>
    </interactant>
    <organismsDiffer>false</organismsDiffer>
    <experiments>3</experiments>
</comment>
<comment type="interaction">
    <interactant intactId="EBI-12261896">
        <id>Q5T4B2</id>
    </interactant>
    <interactant intactId="EBI-2339898">
        <id>Q9NW38</id>
        <label>FANCL</label>
    </interactant>
    <organismsDiffer>false</organismsDiffer>
    <experiments>3</experiments>
</comment>
<comment type="interaction">
    <interactant intactId="EBI-12261896">
        <id>Q5T4B2</id>
    </interactant>
    <interactant intactId="EBI-3918971">
        <id>Q9Y680</id>
        <label>FKBP7</label>
    </interactant>
    <organismsDiffer>false</organismsDiffer>
    <experiments>3</experiments>
</comment>
<comment type="interaction">
    <interactant intactId="EBI-12261896">
        <id>Q5T4B2</id>
    </interactant>
    <interactant intactId="EBI-744935">
        <id>Q9BVV2</id>
        <label>FNDC11</label>
    </interactant>
    <organismsDiffer>false</organismsDiffer>
    <experiments>3</experiments>
</comment>
<comment type="interaction">
    <interactant intactId="EBI-12261896">
        <id>Q5T4B2</id>
    </interactant>
    <interactant intactId="EBI-356700">
        <id>P57678</id>
        <label>GEMIN4</label>
    </interactant>
    <organismsDiffer>false</organismsDiffer>
    <experiments>3</experiments>
</comment>
<comment type="interaction">
    <interactant intactId="EBI-12261896">
        <id>Q5T4B2</id>
    </interactant>
    <interactant intactId="EBI-374781">
        <id>O76003</id>
        <label>GLRX3</label>
    </interactant>
    <organismsDiffer>false</organismsDiffer>
    <experiments>3</experiments>
</comment>
<comment type="interaction">
    <interactant intactId="EBI-12261896">
        <id>Q5T4B2</id>
    </interactant>
    <interactant intactId="EBI-740785">
        <id>P49639</id>
        <label>HOXA1</label>
    </interactant>
    <organismsDiffer>false</organismsDiffer>
    <experiments>3</experiments>
</comment>
<comment type="interaction">
    <interactant intactId="EBI-12261896">
        <id>Q5T4B2</id>
    </interactant>
    <interactant intactId="EBI-6426443">
        <id>Q2WGJ6</id>
        <label>KLHL38</label>
    </interactant>
    <organismsDiffer>false</organismsDiffer>
    <experiments>3</experiments>
</comment>
<comment type="interaction">
    <interactant intactId="EBI-12261896">
        <id>Q5T4B2</id>
    </interactant>
    <interactant intactId="EBI-11992140">
        <id>Q3LI76</id>
        <label>KRTAP15-1</label>
    </interactant>
    <organismsDiffer>false</organismsDiffer>
    <experiments>3</experiments>
</comment>
<comment type="interaction">
    <interactant intactId="EBI-12261896">
        <id>Q5T4B2</id>
    </interactant>
    <interactant intactId="EBI-3957672">
        <id>Q6PEX3</id>
        <label>KRTAP26-1</label>
    </interactant>
    <organismsDiffer>false</organismsDiffer>
    <experiments>3</experiments>
</comment>
<comment type="interaction">
    <interactant intactId="EBI-12261896">
        <id>Q5T4B2</id>
    </interactant>
    <interactant intactId="EBI-3957694">
        <id>Q9BYR6</id>
        <label>KRTAP3-3</label>
    </interactant>
    <organismsDiffer>false</organismsDiffer>
    <experiments>3</experiments>
</comment>
<comment type="interaction">
    <interactant intactId="EBI-12261896">
        <id>Q5T4B2</id>
    </interactant>
    <interactant intactId="EBI-11962084">
        <id>Q3LI66</id>
        <label>KRTAP6-2</label>
    </interactant>
    <organismsDiffer>false</organismsDiffer>
    <experiments>3</experiments>
</comment>
<comment type="interaction">
    <interactant intactId="EBI-12261896">
        <id>Q5T4B2</id>
    </interactant>
    <interactant intactId="EBI-10261141">
        <id>Q8IUC2</id>
        <label>KRTAP8-1</label>
    </interactant>
    <organismsDiffer>false</organismsDiffer>
    <experiments>3</experiments>
</comment>
<comment type="interaction">
    <interactant intactId="EBI-12261896">
        <id>Q5T4B2</id>
    </interactant>
    <interactant intactId="EBI-1043191">
        <id>Q9BYQ3</id>
        <label>KRTAP9-3</label>
    </interactant>
    <organismsDiffer>false</organismsDiffer>
    <experiments>3</experiments>
</comment>
<comment type="interaction">
    <interactant intactId="EBI-12261896">
        <id>Q5T4B2</id>
    </interactant>
    <interactant intactId="EBI-9088686">
        <id>Q14847-2</id>
        <label>LASP1</label>
    </interactant>
    <organismsDiffer>false</organismsDiffer>
    <experiments>3</experiments>
</comment>
<comment type="interaction">
    <interactant intactId="EBI-12261896">
        <id>Q5T4B2</id>
    </interactant>
    <interactant intactId="EBI-716006">
        <id>Q9Y5V3</id>
        <label>MAGED1</label>
    </interactant>
    <organismsDiffer>false</organismsDiffer>
    <experiments>3</experiments>
</comment>
<comment type="interaction">
    <interactant intactId="EBI-12261896">
        <id>Q5T4B2</id>
    </interactant>
    <interactant intactId="EBI-2340269">
        <id>Q13064</id>
        <label>MKRN3</label>
    </interactant>
    <organismsDiffer>false</organismsDiffer>
    <experiments>3</experiments>
</comment>
<comment type="interaction">
    <interactant intactId="EBI-12261896">
        <id>Q5T4B2</id>
    </interactant>
    <interactant intactId="EBI-740446">
        <id>P32242</id>
        <label>OTX1</label>
    </interactant>
    <organismsDiffer>false</organismsDiffer>
    <experiments>3</experiments>
</comment>
<comment type="interaction">
    <interactant intactId="EBI-12261896">
        <id>Q5T4B2</id>
    </interactant>
    <interactant intactId="EBI-10181968">
        <id>Q7Z4N8</id>
        <label>P4HA3</label>
    </interactant>
    <organismsDiffer>false</organismsDiffer>
    <experiments>3</experiments>
</comment>
<comment type="interaction">
    <interactant intactId="EBI-12261896">
        <id>Q5T4B2</id>
    </interactant>
    <interactant intactId="EBI-1389308">
        <id>Q7Z3K3</id>
        <label>POGZ</label>
    </interactant>
    <organismsDiffer>false</organismsDiffer>
    <experiments>3</experiments>
</comment>
<comment type="interaction">
    <interactant intactId="EBI-12261896">
        <id>Q5T4B2</id>
    </interactant>
    <interactant intactId="EBI-17236143">
        <id>Q12837</id>
        <label>POU4F2</label>
    </interactant>
    <organismsDiffer>false</organismsDiffer>
    <experiments>3</experiments>
</comment>
<comment type="interaction">
    <interactant intactId="EBI-12261896">
        <id>Q5T4B2</id>
    </interactant>
    <interactant intactId="EBI-372094">
        <id>Q9BQY4</id>
        <label>RHOXF2</label>
    </interactant>
    <organismsDiffer>false</organismsDiffer>
    <experiments>3</experiments>
</comment>
<comment type="interaction">
    <interactant intactId="EBI-12261896">
        <id>Q5T4B2</id>
    </interactant>
    <interactant intactId="EBI-2854842">
        <id>Q8WV19</id>
        <label>SFT2D1</label>
    </interactant>
    <organismsDiffer>false</organismsDiffer>
    <experiments>3</experiments>
</comment>
<comment type="interaction">
    <interactant intactId="EBI-12261896">
        <id>Q5T4B2</id>
    </interactant>
    <interactant intactId="EBI-12288855">
        <id>Q5JUK2</id>
        <label>SOHLH1</label>
    </interactant>
    <organismsDiffer>false</organismsDiffer>
    <experiments>3</experiments>
</comment>
<comment type="interaction">
    <interactant intactId="EBI-12261896">
        <id>Q5T4B2</id>
    </interactant>
    <interactant intactId="EBI-752030">
        <id>Q96A09</id>
        <label>TENT5B</label>
    </interactant>
    <organismsDiffer>false</organismsDiffer>
    <experiments>3</experiments>
</comment>
<comment type="interaction">
    <interactant intactId="EBI-12261896">
        <id>Q5T4B2</id>
    </interactant>
    <interactant intactId="EBI-607755">
        <id>Q9BZL1</id>
        <label>UBL5</label>
    </interactant>
    <organismsDiffer>false</organismsDiffer>
    <experiments>3</experiments>
</comment>
<comment type="interaction">
    <interactant intactId="EBI-12261896">
        <id>Q5T4B2</id>
    </interactant>
    <interactant intactId="EBI-10191303">
        <id>O95231</id>
        <label>VENTX</label>
    </interactant>
    <organismsDiffer>false</organismsDiffer>
    <experiments>3</experiments>
</comment>
<comment type="interaction">
    <interactant intactId="EBI-12261896">
        <id>Q5T4B2</id>
    </interactant>
    <interactant intactId="EBI-11957216">
        <id>A8MV65-2</id>
        <label>VGLL3</label>
    </interactant>
    <organismsDiffer>false</organismsDiffer>
    <experiments>3</experiments>
</comment>
<comment type="interaction">
    <interactant intactId="EBI-12261896">
        <id>Q5T4B2</id>
    </interactant>
    <interactant intactId="EBI-12837904">
        <id>Q96MV8</id>
        <label>ZDHHC15</label>
    </interactant>
    <organismsDiffer>false</organismsDiffer>
    <experiments>3</experiments>
</comment>
<comment type="subcellular location">
    <subcellularLocation>
        <location evidence="2">Endoplasmic reticulum lumen</location>
    </subcellularLocation>
</comment>
<comment type="alternative products">
    <event type="alternative splicing"/>
    <isoform>
        <id>Q5T4B2-1</id>
        <name>1</name>
        <sequence type="displayed"/>
    </isoform>
    <isoform>
        <id>Q5T4B2-2</id>
        <name>2</name>
        <sequence type="described" ref="VSP_029234"/>
    </isoform>
</comment>
<comment type="tissue specificity">
    <text evidence="4 5">Ubiquitous. Highly expressed in secretory and nervous tissues.</text>
</comment>
<comment type="similarity">
    <text evidence="10">Belongs to the glycosyltransferase 25 family.</text>
</comment>
<comment type="caution">
    <text evidence="10">Has no glucosyltransferase activity. Concerning beta-galactosyltransferase activity, the level of CERCAM could be too low to detect any activity when tested in transfected insect cells.</text>
</comment>
<comment type="sequence caution" evidence="10">
    <conflict type="erroneous initiation">
        <sequence resource="EMBL-CDS" id="AAH98432"/>
    </conflict>
</comment>
<comment type="sequence caution" evidence="10">
    <conflict type="erroneous initiation">
        <sequence resource="EMBL-CDS" id="AAI19699"/>
    </conflict>
</comment>
<comment type="sequence caution" evidence="10">
    <conflict type="erroneous initiation">
        <sequence resource="EMBL-CDS" id="AAI19700"/>
    </conflict>
</comment>
<comment type="sequence caution" evidence="10">
    <conflict type="erroneous initiation">
        <sequence resource="EMBL-CDS" id="BAA96026"/>
    </conflict>
</comment>
<comment type="sequence caution" evidence="10">
    <conflict type="erroneous initiation">
        <sequence resource="EMBL-CDS" id="BAC11040"/>
    </conflict>
</comment>
<name>GT253_HUMAN</name>
<protein>
    <recommendedName>
        <fullName>Inactive glycosyltransferase 25 family member 3</fullName>
    </recommendedName>
    <alternativeName>
        <fullName>Cerebral endothelial cell adhesion molecule</fullName>
    </alternativeName>
</protein>
<evidence type="ECO:0000255" key="1"/>
<evidence type="ECO:0000255" key="2">
    <source>
        <dbReference type="PROSITE-ProRule" id="PRU10138"/>
    </source>
</evidence>
<evidence type="ECO:0000256" key="3">
    <source>
        <dbReference type="SAM" id="MobiDB-lite"/>
    </source>
</evidence>
<evidence type="ECO:0000269" key="4">
    <source>
    </source>
</evidence>
<evidence type="ECO:0000269" key="5">
    <source>
    </source>
</evidence>
<evidence type="ECO:0000269" key="6">
    <source>
    </source>
</evidence>
<evidence type="ECO:0000303" key="7">
    <source>
    </source>
</evidence>
<evidence type="ECO:0000303" key="8">
    <source>
    </source>
</evidence>
<evidence type="ECO:0000303" key="9">
    <source>
    </source>
</evidence>
<evidence type="ECO:0000305" key="10"/>
<reference key="1">
    <citation type="journal article" date="2000" name="J. Infect. Dis.">
        <title>Cerebral cell adhesion molecule: a novel leukocyte adhesion determinant on blood-brain barrier capillary endothelium.</title>
        <authorList>
            <person name="Starzyk R.M."/>
            <person name="Rosenow C."/>
            <person name="Frye J."/>
            <person name="Leismann M."/>
            <person name="Rodzinski E."/>
            <person name="Putney S."/>
            <person name="Tuomanen E.I."/>
        </authorList>
    </citation>
    <scope>NUCLEOTIDE SEQUENCE [MRNA] (ISOFORM 2)</scope>
    <scope>FUNCTION</scope>
    <scope>TISSUE SPECIFICITY</scope>
    <source>
        <tissue>Brain capillary</tissue>
    </source>
</reference>
<reference key="2">
    <citation type="journal article" date="2004" name="Nat. Genet.">
        <title>Complete sequencing and characterization of 21,243 full-length human cDNAs.</title>
        <authorList>
            <person name="Ota T."/>
            <person name="Suzuki Y."/>
            <person name="Nishikawa T."/>
            <person name="Otsuki T."/>
            <person name="Sugiyama T."/>
            <person name="Irie R."/>
            <person name="Wakamatsu A."/>
            <person name="Hayashi K."/>
            <person name="Sato H."/>
            <person name="Nagai K."/>
            <person name="Kimura K."/>
            <person name="Makita H."/>
            <person name="Sekine M."/>
            <person name="Obayashi M."/>
            <person name="Nishi T."/>
            <person name="Shibahara T."/>
            <person name="Tanaka T."/>
            <person name="Ishii S."/>
            <person name="Yamamoto J."/>
            <person name="Saito K."/>
            <person name="Kawai Y."/>
            <person name="Isono Y."/>
            <person name="Nakamura Y."/>
            <person name="Nagahari K."/>
            <person name="Murakami K."/>
            <person name="Yasuda T."/>
            <person name="Iwayanagi T."/>
            <person name="Wagatsuma M."/>
            <person name="Shiratori A."/>
            <person name="Sudo H."/>
            <person name="Hosoiri T."/>
            <person name="Kaku Y."/>
            <person name="Kodaira H."/>
            <person name="Kondo H."/>
            <person name="Sugawara M."/>
            <person name="Takahashi M."/>
            <person name="Kanda K."/>
            <person name="Yokoi T."/>
            <person name="Furuya T."/>
            <person name="Kikkawa E."/>
            <person name="Omura Y."/>
            <person name="Abe K."/>
            <person name="Kamihara K."/>
            <person name="Katsuta N."/>
            <person name="Sato K."/>
            <person name="Tanikawa M."/>
            <person name="Yamazaki M."/>
            <person name="Ninomiya K."/>
            <person name="Ishibashi T."/>
            <person name="Yamashita H."/>
            <person name="Murakawa K."/>
            <person name="Fujimori K."/>
            <person name="Tanai H."/>
            <person name="Kimata M."/>
            <person name="Watanabe M."/>
            <person name="Hiraoka S."/>
            <person name="Chiba Y."/>
            <person name="Ishida S."/>
            <person name="Ono Y."/>
            <person name="Takiguchi S."/>
            <person name="Watanabe S."/>
            <person name="Yosida M."/>
            <person name="Hotuta T."/>
            <person name="Kusano J."/>
            <person name="Kanehori K."/>
            <person name="Takahashi-Fujii A."/>
            <person name="Hara H."/>
            <person name="Tanase T.-O."/>
            <person name="Nomura Y."/>
            <person name="Togiya S."/>
            <person name="Komai F."/>
            <person name="Hara R."/>
            <person name="Takeuchi K."/>
            <person name="Arita M."/>
            <person name="Imose N."/>
            <person name="Musashino K."/>
            <person name="Yuuki H."/>
            <person name="Oshima A."/>
            <person name="Sasaki N."/>
            <person name="Aotsuka S."/>
            <person name="Yoshikawa Y."/>
            <person name="Matsunawa H."/>
            <person name="Ichihara T."/>
            <person name="Shiohata N."/>
            <person name="Sano S."/>
            <person name="Moriya S."/>
            <person name="Momiyama H."/>
            <person name="Satoh N."/>
            <person name="Takami S."/>
            <person name="Terashima Y."/>
            <person name="Suzuki O."/>
            <person name="Nakagawa S."/>
            <person name="Senoh A."/>
            <person name="Mizoguchi H."/>
            <person name="Goto Y."/>
            <person name="Shimizu F."/>
            <person name="Wakebe H."/>
            <person name="Hishigaki H."/>
            <person name="Watanabe T."/>
            <person name="Sugiyama A."/>
            <person name="Takemoto M."/>
            <person name="Kawakami B."/>
            <person name="Yamazaki M."/>
            <person name="Watanabe K."/>
            <person name="Kumagai A."/>
            <person name="Itakura S."/>
            <person name="Fukuzumi Y."/>
            <person name="Fujimori Y."/>
            <person name="Komiyama M."/>
            <person name="Tashiro H."/>
            <person name="Tanigami A."/>
            <person name="Fujiwara T."/>
            <person name="Ono T."/>
            <person name="Yamada K."/>
            <person name="Fujii Y."/>
            <person name="Ozaki K."/>
            <person name="Hirao M."/>
            <person name="Ohmori Y."/>
            <person name="Kawabata A."/>
            <person name="Hikiji T."/>
            <person name="Kobatake N."/>
            <person name="Inagaki H."/>
            <person name="Ikema Y."/>
            <person name="Okamoto S."/>
            <person name="Okitani R."/>
            <person name="Kawakami T."/>
            <person name="Noguchi S."/>
            <person name="Itoh T."/>
            <person name="Shigeta K."/>
            <person name="Senba T."/>
            <person name="Matsumura K."/>
            <person name="Nakajima Y."/>
            <person name="Mizuno T."/>
            <person name="Morinaga M."/>
            <person name="Sasaki M."/>
            <person name="Togashi T."/>
            <person name="Oyama M."/>
            <person name="Hata H."/>
            <person name="Watanabe M."/>
            <person name="Komatsu T."/>
            <person name="Mizushima-Sugano J."/>
            <person name="Satoh T."/>
            <person name="Shirai Y."/>
            <person name="Takahashi Y."/>
            <person name="Nakagawa K."/>
            <person name="Okumura K."/>
            <person name="Nagase T."/>
            <person name="Nomura N."/>
            <person name="Kikuchi H."/>
            <person name="Masuho Y."/>
            <person name="Yamashita R."/>
            <person name="Nakai K."/>
            <person name="Yada T."/>
            <person name="Nakamura Y."/>
            <person name="Ohara O."/>
            <person name="Isogai T."/>
            <person name="Sugano S."/>
        </authorList>
    </citation>
    <scope>NUCLEOTIDE SEQUENCE [LARGE SCALE MRNA] (ISOFORM 2)</scope>
    <scope>NUCLEOTIDE SEQUENCE [LARGE SCALE MRNA] OF 65-595 (ISOFORM 1)</scope>
    <source>
        <tissue>Embryo</tissue>
    </source>
</reference>
<reference key="3">
    <citation type="journal article" date="2004" name="Nature">
        <title>DNA sequence and analysis of human chromosome 9.</title>
        <authorList>
            <person name="Humphray S.J."/>
            <person name="Oliver K."/>
            <person name="Hunt A.R."/>
            <person name="Plumb R.W."/>
            <person name="Loveland J.E."/>
            <person name="Howe K.L."/>
            <person name="Andrews T.D."/>
            <person name="Searle S."/>
            <person name="Hunt S.E."/>
            <person name="Scott C.E."/>
            <person name="Jones M.C."/>
            <person name="Ainscough R."/>
            <person name="Almeida J.P."/>
            <person name="Ambrose K.D."/>
            <person name="Ashwell R.I.S."/>
            <person name="Babbage A.K."/>
            <person name="Babbage S."/>
            <person name="Bagguley C.L."/>
            <person name="Bailey J."/>
            <person name="Banerjee R."/>
            <person name="Barker D.J."/>
            <person name="Barlow K.F."/>
            <person name="Bates K."/>
            <person name="Beasley H."/>
            <person name="Beasley O."/>
            <person name="Bird C.P."/>
            <person name="Bray-Allen S."/>
            <person name="Brown A.J."/>
            <person name="Brown J.Y."/>
            <person name="Burford D."/>
            <person name="Burrill W."/>
            <person name="Burton J."/>
            <person name="Carder C."/>
            <person name="Carter N.P."/>
            <person name="Chapman J.C."/>
            <person name="Chen Y."/>
            <person name="Clarke G."/>
            <person name="Clark S.Y."/>
            <person name="Clee C.M."/>
            <person name="Clegg S."/>
            <person name="Collier R.E."/>
            <person name="Corby N."/>
            <person name="Crosier M."/>
            <person name="Cummings A.T."/>
            <person name="Davies J."/>
            <person name="Dhami P."/>
            <person name="Dunn M."/>
            <person name="Dutta I."/>
            <person name="Dyer L.W."/>
            <person name="Earthrowl M.E."/>
            <person name="Faulkner L."/>
            <person name="Fleming C.J."/>
            <person name="Frankish A."/>
            <person name="Frankland J.A."/>
            <person name="French L."/>
            <person name="Fricker D.G."/>
            <person name="Garner P."/>
            <person name="Garnett J."/>
            <person name="Ghori J."/>
            <person name="Gilbert J.G.R."/>
            <person name="Glison C."/>
            <person name="Grafham D.V."/>
            <person name="Gribble S."/>
            <person name="Griffiths C."/>
            <person name="Griffiths-Jones S."/>
            <person name="Grocock R."/>
            <person name="Guy J."/>
            <person name="Hall R.E."/>
            <person name="Hammond S."/>
            <person name="Harley J.L."/>
            <person name="Harrison E.S.I."/>
            <person name="Hart E.A."/>
            <person name="Heath P.D."/>
            <person name="Henderson C.D."/>
            <person name="Hopkins B.L."/>
            <person name="Howard P.J."/>
            <person name="Howden P.J."/>
            <person name="Huckle E."/>
            <person name="Johnson C."/>
            <person name="Johnson D."/>
            <person name="Joy A.A."/>
            <person name="Kay M."/>
            <person name="Keenan S."/>
            <person name="Kershaw J.K."/>
            <person name="Kimberley A.M."/>
            <person name="King A."/>
            <person name="Knights A."/>
            <person name="Laird G.K."/>
            <person name="Langford C."/>
            <person name="Lawlor S."/>
            <person name="Leongamornlert D.A."/>
            <person name="Leversha M."/>
            <person name="Lloyd C."/>
            <person name="Lloyd D.M."/>
            <person name="Lovell J."/>
            <person name="Martin S."/>
            <person name="Mashreghi-Mohammadi M."/>
            <person name="Matthews L."/>
            <person name="McLaren S."/>
            <person name="McLay K.E."/>
            <person name="McMurray A."/>
            <person name="Milne S."/>
            <person name="Nickerson T."/>
            <person name="Nisbett J."/>
            <person name="Nordsiek G."/>
            <person name="Pearce A.V."/>
            <person name="Peck A.I."/>
            <person name="Porter K.M."/>
            <person name="Pandian R."/>
            <person name="Pelan S."/>
            <person name="Phillimore B."/>
            <person name="Povey S."/>
            <person name="Ramsey Y."/>
            <person name="Rand V."/>
            <person name="Scharfe M."/>
            <person name="Sehra H.K."/>
            <person name="Shownkeen R."/>
            <person name="Sims S.K."/>
            <person name="Skuce C.D."/>
            <person name="Smith M."/>
            <person name="Steward C.A."/>
            <person name="Swarbreck D."/>
            <person name="Sycamore N."/>
            <person name="Tester J."/>
            <person name="Thorpe A."/>
            <person name="Tracey A."/>
            <person name="Tromans A."/>
            <person name="Thomas D.W."/>
            <person name="Wall M."/>
            <person name="Wallis J.M."/>
            <person name="West A.P."/>
            <person name="Whitehead S.L."/>
            <person name="Willey D.L."/>
            <person name="Williams S.A."/>
            <person name="Wilming L."/>
            <person name="Wray P.W."/>
            <person name="Young L."/>
            <person name="Ashurst J.L."/>
            <person name="Coulson A."/>
            <person name="Blocker H."/>
            <person name="Durbin R.M."/>
            <person name="Sulston J.E."/>
            <person name="Hubbard T."/>
            <person name="Jackson M.J."/>
            <person name="Bentley D.R."/>
            <person name="Beck S."/>
            <person name="Rogers J."/>
            <person name="Dunham I."/>
        </authorList>
    </citation>
    <scope>NUCLEOTIDE SEQUENCE [LARGE SCALE GENOMIC DNA]</scope>
</reference>
<reference key="4">
    <citation type="submission" date="2005-07" db="EMBL/GenBank/DDBJ databases">
        <authorList>
            <person name="Mural R.J."/>
            <person name="Istrail S."/>
            <person name="Sutton G.G."/>
            <person name="Florea L."/>
            <person name="Halpern A.L."/>
            <person name="Mobarry C.M."/>
            <person name="Lippert R."/>
            <person name="Walenz B."/>
            <person name="Shatkay H."/>
            <person name="Dew I."/>
            <person name="Miller J.R."/>
            <person name="Flanigan M.J."/>
            <person name="Edwards N.J."/>
            <person name="Bolanos R."/>
            <person name="Fasulo D."/>
            <person name="Halldorsson B.V."/>
            <person name="Hannenhalli S."/>
            <person name="Turner R."/>
            <person name="Yooseph S."/>
            <person name="Lu F."/>
            <person name="Nusskern D.R."/>
            <person name="Shue B.C."/>
            <person name="Zheng X.H."/>
            <person name="Zhong F."/>
            <person name="Delcher A.L."/>
            <person name="Huson D.H."/>
            <person name="Kravitz S.A."/>
            <person name="Mouchard L."/>
            <person name="Reinert K."/>
            <person name="Remington K.A."/>
            <person name="Clark A.G."/>
            <person name="Waterman M.S."/>
            <person name="Eichler E.E."/>
            <person name="Adams M.D."/>
            <person name="Hunkapiller M.W."/>
            <person name="Myers E.W."/>
            <person name="Venter J.C."/>
        </authorList>
    </citation>
    <scope>NUCLEOTIDE SEQUENCE [LARGE SCALE GENOMIC DNA]</scope>
</reference>
<reference key="5">
    <citation type="journal article" date="2004" name="Genome Res.">
        <title>The status, quality, and expansion of the NIH full-length cDNA project: the Mammalian Gene Collection (MGC).</title>
        <authorList>
            <consortium name="The MGC Project Team"/>
        </authorList>
    </citation>
    <scope>NUCLEOTIDE SEQUENCE [LARGE SCALE MRNA] (ISOFORM 1)</scope>
    <scope>NUCLEOTIDE SEQUENCE [LARGE SCALE MRNA] OF 321-595 (ISOFORMS 1/2)</scope>
    <source>
        <tissue>Muscle</tissue>
        <tissue>Ovary</tissue>
        <tissue>PNS</tissue>
    </source>
</reference>
<reference key="6">
    <citation type="journal article" date="2000" name="DNA Res.">
        <title>Prediction of the coding sequences of unidentified human genes. XVII. The complete sequences of 100 new cDNA clones from brain which code for large proteins in vitro.</title>
        <authorList>
            <person name="Nagase T."/>
            <person name="Kikuno R."/>
            <person name="Ishikawa K."/>
            <person name="Hirosawa M."/>
            <person name="Ohara O."/>
        </authorList>
    </citation>
    <scope>NUCLEOTIDE SEQUENCE [LARGE SCALE MRNA] OF 1-561 (ISOFORM 2)</scope>
    <source>
        <tissue>Brain</tissue>
    </source>
</reference>
<reference key="7">
    <citation type="journal article" date="2009" name="Mol. Cell. Biol.">
        <title>Core glycosylation of collagen is initiated by two beta(1-O)galactosyltransferases.</title>
        <authorList>
            <person name="Schegg B."/>
            <person name="Huelsmeier A.J."/>
            <person name="Rutschmann C."/>
            <person name="Maag C."/>
            <person name="Hennet T."/>
        </authorList>
    </citation>
    <scope>FUNCTION</scope>
    <scope>LACK OF GALACTOSYLTRANSFERASE ACTIVITY</scope>
    <scope>TISSUE SPECIFICITY</scope>
</reference>
<reference key="8">
    <citation type="journal article" date="2011" name="PLoS ONE">
        <title>Identification of domains and amino acids essential to the collagen galactosyltransferase activity of GLT25D1.</title>
        <authorList>
            <person name="Perrin-Tricaud C."/>
            <person name="Rutschmann C."/>
            <person name="Hennet T."/>
        </authorList>
    </citation>
    <scope>LACK OF GALACTOSYLTRANSFERASE ACTIVITY</scope>
    <scope>MUTAGENESIS OF SER-440; GLN-450; VAL-451; ASN-452 AND PRO-453</scope>
</reference>
<accession>Q5T4B2</accession>
<accession>A7MD00</accession>
<accession>C4AMA2</accession>
<accession>Q0VDF3</accession>
<accession>Q2VPJ4</accession>
<accession>Q4KMP2</accession>
<accession>Q5T4B1</accession>
<accession>Q8N107</accession>
<accession>Q96EZ5</accession>
<accession>Q9P226</accession>
<accession>Q9UMW5</accession>
<sequence>MRAARAAPLLQLLLLLGPWLEAAGVAESPLPAVVLAILARNAEHSLPHYLGALERLDYPRARMALWCATDHNVDNTTEMLQEWLAAVGDDYAAVVWRPEGEPRFYPDEEGPKHWTKERHQFLMELKQEALTFARNWGADYILFADTDNILTNNQTLRLLMGQGLPVVAPMLDSQTYYSNFWCGITPQGYYRRTAEYFPTKNRQRRGCFRVPMVHSTFLASLRAEGADQLAFYPPHPNYTWPFDDIIVFAYACQAAGVSVHVCNEHRYGYMNVPVKSHQGLEDERVNFIHLILEALVDGPRMQASAHVTRPSKRPSKIGFDEVFVISLARRPDRRERMLASLWEMEISGRVVDAVDGWMLNSSAIRNLGVDLLPGYQDPYSGRTLTKGEVGCFLSHYSIWEEVVARGLARVLVFEDDVRFESNFRGRLERLMEDVEAEKLSWDLIYLGRKQVNPEKETAVEGLPGLVVAGYSYWTLAYALRLAGARKLLASQPLRRMLPVDEFLPIMFDQHPNEQYKAHFWPRDLVAFSAQPLLAAPTHYAGDAEWLSDTETSSPWDDDSGRLISWSGSQKTLRSPRLDLTGSSGHSLQPQPRDEL</sequence>